<reference key="1">
    <citation type="journal article" date="2005" name="J. Bacteriol.">
        <title>Genomic sequence of an otitis media isolate of nontypeable Haemophilus influenzae: comparative study with H. influenzae serotype d, strain KW20.</title>
        <authorList>
            <person name="Harrison A."/>
            <person name="Dyer D.W."/>
            <person name="Gillaspy A."/>
            <person name="Ray W.C."/>
            <person name="Mungur R."/>
            <person name="Carson M.B."/>
            <person name="Zhong H."/>
            <person name="Gipson J."/>
            <person name="Gipson M."/>
            <person name="Johnson L.S."/>
            <person name="Lewis L."/>
            <person name="Bakaletz L.O."/>
            <person name="Munson R.S. Jr."/>
        </authorList>
    </citation>
    <scope>NUCLEOTIDE SEQUENCE [LARGE SCALE GENOMIC DNA]</scope>
    <source>
        <strain>86-028NP</strain>
    </source>
</reference>
<proteinExistence type="inferred from homology"/>
<organism>
    <name type="scientific">Haemophilus influenzae (strain 86-028NP)</name>
    <dbReference type="NCBI Taxonomy" id="281310"/>
    <lineage>
        <taxon>Bacteria</taxon>
        <taxon>Pseudomonadati</taxon>
        <taxon>Pseudomonadota</taxon>
        <taxon>Gammaproteobacteria</taxon>
        <taxon>Pasteurellales</taxon>
        <taxon>Pasteurellaceae</taxon>
        <taxon>Haemophilus</taxon>
    </lineage>
</organism>
<protein>
    <recommendedName>
        <fullName evidence="1">Large ribosomal subunit protein uL10</fullName>
    </recommendedName>
    <alternativeName>
        <fullName evidence="2">50S ribosomal protein L10</fullName>
    </alternativeName>
</protein>
<name>RL10_HAEI8</name>
<accession>Q4QMS7</accession>
<keyword id="KW-0687">Ribonucleoprotein</keyword>
<keyword id="KW-0689">Ribosomal protein</keyword>
<keyword id="KW-0694">RNA-binding</keyword>
<keyword id="KW-0699">rRNA-binding</keyword>
<evidence type="ECO:0000255" key="1">
    <source>
        <dbReference type="HAMAP-Rule" id="MF_00362"/>
    </source>
</evidence>
<evidence type="ECO:0000305" key="2"/>
<dbReference type="EMBL" id="CP000057">
    <property type="protein sequence ID" value="AAX87670.1"/>
    <property type="molecule type" value="Genomic_DNA"/>
</dbReference>
<dbReference type="RefSeq" id="WP_011272138.1">
    <property type="nucleotide sequence ID" value="NC_007146.2"/>
</dbReference>
<dbReference type="SMR" id="Q4QMS7"/>
<dbReference type="KEGG" id="hit:NTHI0759"/>
<dbReference type="HOGENOM" id="CLU_092227_0_2_6"/>
<dbReference type="Proteomes" id="UP000002525">
    <property type="component" value="Chromosome"/>
</dbReference>
<dbReference type="GO" id="GO:0015934">
    <property type="term" value="C:large ribosomal subunit"/>
    <property type="evidence" value="ECO:0007669"/>
    <property type="project" value="InterPro"/>
</dbReference>
<dbReference type="GO" id="GO:0070180">
    <property type="term" value="F:large ribosomal subunit rRNA binding"/>
    <property type="evidence" value="ECO:0007669"/>
    <property type="project" value="UniProtKB-UniRule"/>
</dbReference>
<dbReference type="GO" id="GO:0003735">
    <property type="term" value="F:structural constituent of ribosome"/>
    <property type="evidence" value="ECO:0007669"/>
    <property type="project" value="InterPro"/>
</dbReference>
<dbReference type="GO" id="GO:0006412">
    <property type="term" value="P:translation"/>
    <property type="evidence" value="ECO:0007669"/>
    <property type="project" value="UniProtKB-UniRule"/>
</dbReference>
<dbReference type="CDD" id="cd05797">
    <property type="entry name" value="Ribosomal_L10"/>
    <property type="match status" value="1"/>
</dbReference>
<dbReference type="FunFam" id="3.30.70.1730:FF:000001">
    <property type="entry name" value="50S ribosomal protein L10"/>
    <property type="match status" value="1"/>
</dbReference>
<dbReference type="Gene3D" id="3.30.70.1730">
    <property type="match status" value="1"/>
</dbReference>
<dbReference type="Gene3D" id="6.10.250.2350">
    <property type="match status" value="1"/>
</dbReference>
<dbReference type="HAMAP" id="MF_00362">
    <property type="entry name" value="Ribosomal_uL10"/>
    <property type="match status" value="1"/>
</dbReference>
<dbReference type="InterPro" id="IPR001790">
    <property type="entry name" value="Ribosomal_uL10"/>
</dbReference>
<dbReference type="InterPro" id="IPR043141">
    <property type="entry name" value="Ribosomal_uL10-like_sf"/>
</dbReference>
<dbReference type="InterPro" id="IPR022973">
    <property type="entry name" value="Ribosomal_uL10_bac"/>
</dbReference>
<dbReference type="InterPro" id="IPR047865">
    <property type="entry name" value="Ribosomal_uL10_bac_type"/>
</dbReference>
<dbReference type="InterPro" id="IPR002363">
    <property type="entry name" value="Ribosomal_uL10_CS_bac"/>
</dbReference>
<dbReference type="NCBIfam" id="NF000955">
    <property type="entry name" value="PRK00099.1-1"/>
    <property type="match status" value="1"/>
</dbReference>
<dbReference type="PANTHER" id="PTHR11560">
    <property type="entry name" value="39S RIBOSOMAL PROTEIN L10, MITOCHONDRIAL"/>
    <property type="match status" value="1"/>
</dbReference>
<dbReference type="Pfam" id="PF00466">
    <property type="entry name" value="Ribosomal_L10"/>
    <property type="match status" value="1"/>
</dbReference>
<dbReference type="SUPFAM" id="SSF160369">
    <property type="entry name" value="Ribosomal protein L10-like"/>
    <property type="match status" value="1"/>
</dbReference>
<dbReference type="PROSITE" id="PS01109">
    <property type="entry name" value="RIBOSOMAL_L10"/>
    <property type="match status" value="1"/>
</dbReference>
<gene>
    <name evidence="1" type="primary">rplJ</name>
    <name type="ordered locus">NTHI0759</name>
</gene>
<comment type="function">
    <text evidence="1">Forms part of the ribosomal stalk, playing a central role in the interaction of the ribosome with GTP-bound translation factors.</text>
</comment>
<comment type="subunit">
    <text evidence="1">Part of the ribosomal stalk of the 50S ribosomal subunit. The N-terminus interacts with L11 and the large rRNA to form the base of the stalk. The C-terminus forms an elongated spine to which L12 dimers bind in a sequential fashion forming a multimeric L10(L12)X complex.</text>
</comment>
<comment type="similarity">
    <text evidence="1">Belongs to the universal ribosomal protein uL10 family.</text>
</comment>
<feature type="chain" id="PRO_0000234852" description="Large ribosomal subunit protein uL10">
    <location>
        <begin position="1"/>
        <end position="163"/>
    </location>
</feature>
<sequence length="163" mass="17736">MALNLQDKQAIVAEVNEAAKGALSAVIADSRGVTVEKMTELRKSAREAGVTMRVVRNTLLRRAVEGTDYECLKDTFVGPTLIAFSNEHPGEAARLFKEFAKANDKFEIKGAAFEGKIQDVEFLATLPTYEEAIARLMGTMKEAAAGKLARTFAALRDKLQEAA</sequence>